<comment type="function">
    <text evidence="1">Probable head completion protein that exhibits an open central channel for viral DNA ejection. Part of the head-tail connector by binding to the portal protein and to the head completion protein 2. Plays a role in morphogenesis of the virion capsid after genome packaging.</text>
</comment>
<comment type="subcellular location">
    <subcellularLocation>
        <location evidence="1">Virion</location>
    </subcellularLocation>
    <text evidence="1">Part of the connector between the portal and the tail.</text>
</comment>
<comment type="similarity">
    <text evidence="2">Belongs to the skunalikevirus head completion protein 1 family.</text>
</comment>
<reference key="1">
    <citation type="journal article" date="1997" name="Mol. Microbiol.">
        <title>Analysis of the DNA sequence, gene expression, origin of replication and modular structure of the Lactococcus lactis lytic bacteriophage sk1.</title>
        <authorList>
            <person name="Chandry P.S."/>
            <person name="Moore S.C."/>
            <person name="Boyce J.D."/>
            <person name="Davidson B.E."/>
            <person name="Hillier A.J."/>
        </authorList>
    </citation>
    <scope>NUCLEOTIDE SEQUENCE [LARGE SCALE GENOMIC DNA]</scope>
</reference>
<evidence type="ECO:0000250" key="1">
    <source>
        <dbReference type="UniProtKB" id="D3WAC7"/>
    </source>
</evidence>
<evidence type="ECO:0000305" key="2"/>
<dbReference type="EMBL" id="AF011378">
    <property type="protein sequence ID" value="AAB70047.1"/>
    <property type="molecule type" value="Genomic_DNA"/>
</dbReference>
<dbReference type="RefSeq" id="NP_044954.1">
    <property type="nucleotide sequence ID" value="NC_001835.1"/>
</dbReference>
<dbReference type="GeneID" id="1261298"/>
<dbReference type="KEGG" id="vg:1261298"/>
<dbReference type="Proteomes" id="UP000000839">
    <property type="component" value="Genome"/>
</dbReference>
<dbReference type="GO" id="GO:0044423">
    <property type="term" value="C:virion component"/>
    <property type="evidence" value="ECO:0007669"/>
    <property type="project" value="UniProtKB-KW"/>
</dbReference>
<dbReference type="GO" id="GO:0099001">
    <property type="term" value="P:symbiont genome ejection through host cell envelope, long flexible tail mechanism"/>
    <property type="evidence" value="ECO:0007669"/>
    <property type="project" value="UniProtKB-KW"/>
</dbReference>
<organism>
    <name type="scientific">Lactococcus phage SK1</name>
    <name type="common">Lactococcus lactis bacteriophage SK1</name>
    <dbReference type="NCBI Taxonomy" id="2905675"/>
    <lineage>
        <taxon>Viruses</taxon>
        <taxon>Duplodnaviria</taxon>
        <taxon>Heunggongvirae</taxon>
        <taxon>Uroviricota</taxon>
        <taxon>Caudoviricetes</taxon>
        <taxon>Skunavirus</taxon>
        <taxon>Skunavirus sk1</taxon>
    </lineage>
</organism>
<feature type="chain" id="PRO_0000438260" description="Probable head completion protein 1">
    <location>
        <begin position="1"/>
        <end position="104"/>
    </location>
</feature>
<accession>O21876</accession>
<protein>
    <recommendedName>
        <fullName evidence="1">Probable head completion protein 1</fullName>
        <shortName>HCP1</shortName>
    </recommendedName>
    <alternativeName>
        <fullName>Connector protein gp8</fullName>
    </alternativeName>
    <alternativeName>
        <fullName evidence="1">Putative connector protein gp8</fullName>
    </alternativeName>
</protein>
<keyword id="KW-1185">Reference proteome</keyword>
<keyword id="KW-0118">Viral capsid assembly</keyword>
<keyword id="KW-1171">Viral genome ejection through host cell envelope</keyword>
<keyword id="KW-1243">Viral long flexible tail ejection system</keyword>
<keyword id="KW-1162">Viral penetration into host cytoplasm</keyword>
<keyword id="KW-1188">Viral release from host cell</keyword>
<keyword id="KW-0946">Virion</keyword>
<keyword id="KW-1160">Virus entry into host cell</keyword>
<sequence length="104" mass="11936">MIFSQVTLQVEKTVKKKNGAEDNVIKPITLPAVKQRISQSRLDEFSMIGLGKNVRYELNGIGEMEDLIFNYFLDEKGETFKRTTWERNPKNNKMILEGLVSNGI</sequence>
<organismHost>
    <name type="scientific">Lactococcus lactis</name>
    <dbReference type="NCBI Taxonomy" id="1358"/>
</organismHost>
<proteinExistence type="inferred from homology"/>
<name>HCP1_BPLSK</name>